<accession>F1N4M2</accession>
<accession>A6QNP2</accession>
<feature type="chain" id="PRO_0000420955" description="Myelin regulatory factor-like protein">
    <location>
        <begin position="1"/>
        <end position="896"/>
    </location>
</feature>
<feature type="transmembrane region" description="Helical" evidence="1">
    <location>
        <begin position="622"/>
        <end position="638"/>
    </location>
</feature>
<feature type="domain" description="Peptidase S74" evidence="3">
    <location>
        <begin position="449"/>
        <end position="557"/>
    </location>
</feature>
<feature type="DNA-binding region" description="NDT80" evidence="2">
    <location>
        <begin position="111"/>
        <end position="403"/>
    </location>
</feature>
<feature type="region of interest" description="Disordered" evidence="4">
    <location>
        <begin position="648"/>
        <end position="672"/>
    </location>
</feature>
<feature type="coiled-coil region" evidence="1">
    <location>
        <begin position="541"/>
        <end position="573"/>
    </location>
</feature>
<feature type="compositionally biased region" description="Polar residues" evidence="4">
    <location>
        <begin position="648"/>
        <end position="658"/>
    </location>
</feature>
<feature type="compositionally biased region" description="Low complexity" evidence="4">
    <location>
        <begin position="659"/>
        <end position="672"/>
    </location>
</feature>
<feature type="sequence conflict" description="In Ref. 2; AAI48935." evidence="5" ref="2">
    <original>M</original>
    <variation>V</variation>
    <location>
        <position position="439"/>
    </location>
</feature>
<protein>
    <recommendedName>
        <fullName>Myelin regulatory factor-like protein</fullName>
    </recommendedName>
</protein>
<reference key="1">
    <citation type="journal article" date="2009" name="Genome Biol.">
        <title>A whole-genome assembly of the domestic cow, Bos taurus.</title>
        <authorList>
            <person name="Zimin A.V."/>
            <person name="Delcher A.L."/>
            <person name="Florea L."/>
            <person name="Kelley D.R."/>
            <person name="Schatz M.C."/>
            <person name="Puiu D."/>
            <person name="Hanrahan F."/>
            <person name="Pertea G."/>
            <person name="Van Tassell C.P."/>
            <person name="Sonstegard T.S."/>
            <person name="Marcais G."/>
            <person name="Roberts M."/>
            <person name="Subramanian P."/>
            <person name="Yorke J.A."/>
            <person name="Salzberg S.L."/>
        </authorList>
    </citation>
    <scope>NUCLEOTIDE SEQUENCE [LARGE SCALE GENOMIC DNA]</scope>
    <source>
        <strain>Hereford</strain>
    </source>
</reference>
<reference key="2">
    <citation type="submission" date="2007-07" db="EMBL/GenBank/DDBJ databases">
        <authorList>
            <consortium name="NIH - Mammalian Gene Collection (MGC) project"/>
        </authorList>
    </citation>
    <scope>NUCLEOTIDE SEQUENCE [LARGE SCALE MRNA]</scope>
    <source>
        <strain>Hereford</strain>
        <tissue>Ascending colon</tissue>
    </source>
</reference>
<comment type="subcellular location">
    <subcellularLocation>
        <location evidence="5">Membrane</location>
        <topology evidence="5">Single-pass membrane protein</topology>
    </subcellularLocation>
</comment>
<comment type="similarity">
    <text evidence="5">Belongs to the MRF family.</text>
</comment>
<dbReference type="EMBL" id="DAAA02013219">
    <property type="status" value="NOT_ANNOTATED_CDS"/>
    <property type="molecule type" value="Genomic_DNA"/>
</dbReference>
<dbReference type="EMBL" id="DAAA02013220">
    <property type="status" value="NOT_ANNOTATED_CDS"/>
    <property type="molecule type" value="Genomic_DNA"/>
</dbReference>
<dbReference type="EMBL" id="DAAA02013221">
    <property type="status" value="NOT_ANNOTATED_CDS"/>
    <property type="molecule type" value="Genomic_DNA"/>
</dbReference>
<dbReference type="EMBL" id="DAAA02013222">
    <property type="status" value="NOT_ANNOTATED_CDS"/>
    <property type="molecule type" value="Genomic_DNA"/>
</dbReference>
<dbReference type="EMBL" id="BC148934">
    <property type="protein sequence ID" value="AAI48935.1"/>
    <property type="molecule type" value="mRNA"/>
</dbReference>
<dbReference type="RefSeq" id="NP_001095793.1">
    <property type="nucleotide sequence ID" value="NM_001102323.1"/>
</dbReference>
<dbReference type="SMR" id="F1N4M2"/>
<dbReference type="FunCoup" id="F1N4M2">
    <property type="interactions" value="17"/>
</dbReference>
<dbReference type="STRING" id="9913.ENSBTAP00000019581"/>
<dbReference type="PaxDb" id="9913-ENSBTAP00000019581"/>
<dbReference type="GeneID" id="781109"/>
<dbReference type="KEGG" id="bta:781109"/>
<dbReference type="CTD" id="196446"/>
<dbReference type="VEuPathDB" id="HostDB:ENSBTAG00000014829"/>
<dbReference type="eggNOG" id="KOG3661">
    <property type="taxonomic scope" value="Eukaryota"/>
</dbReference>
<dbReference type="HOGENOM" id="CLU_004919_1_0_1"/>
<dbReference type="InParanoid" id="F1N4M2"/>
<dbReference type="OMA" id="CHNPGAS"/>
<dbReference type="OrthoDB" id="27041at2759"/>
<dbReference type="TreeFam" id="TF312888"/>
<dbReference type="Proteomes" id="UP000009136">
    <property type="component" value="Chromosome 5"/>
</dbReference>
<dbReference type="Bgee" id="ENSBTAG00000014829">
    <property type="expression patterns" value="Expressed in jejunum and 42 other cell types or tissues"/>
</dbReference>
<dbReference type="GO" id="GO:0005789">
    <property type="term" value="C:endoplasmic reticulum membrane"/>
    <property type="evidence" value="ECO:0000318"/>
    <property type="project" value="GO_Central"/>
</dbReference>
<dbReference type="GO" id="GO:0005634">
    <property type="term" value="C:nucleus"/>
    <property type="evidence" value="ECO:0000318"/>
    <property type="project" value="GO_Central"/>
</dbReference>
<dbReference type="GO" id="GO:0003700">
    <property type="term" value="F:DNA-binding transcription factor activity"/>
    <property type="evidence" value="ECO:0000318"/>
    <property type="project" value="GO_Central"/>
</dbReference>
<dbReference type="GO" id="GO:0043565">
    <property type="term" value="F:sequence-specific DNA binding"/>
    <property type="evidence" value="ECO:0000318"/>
    <property type="project" value="GO_Central"/>
</dbReference>
<dbReference type="GO" id="GO:0045893">
    <property type="term" value="P:positive regulation of DNA-templated transcription"/>
    <property type="evidence" value="ECO:0000318"/>
    <property type="project" value="GO_Central"/>
</dbReference>
<dbReference type="GO" id="GO:0016540">
    <property type="term" value="P:protein autoprocessing"/>
    <property type="evidence" value="ECO:0000318"/>
    <property type="project" value="GO_Central"/>
</dbReference>
<dbReference type="FunFam" id="2.60.40.1390:FF:000009">
    <property type="entry name" value="Myelin regulatory factor like"/>
    <property type="match status" value="1"/>
</dbReference>
<dbReference type="Gene3D" id="2.60.40.1390">
    <property type="entry name" value="NDT80 DNA-binding domain"/>
    <property type="match status" value="1"/>
</dbReference>
<dbReference type="InterPro" id="IPR051577">
    <property type="entry name" value="MRF-like"/>
</dbReference>
<dbReference type="InterPro" id="IPR025719">
    <property type="entry name" value="MYRF_C2"/>
</dbReference>
<dbReference type="InterPro" id="IPR026932">
    <property type="entry name" value="MYRF_ICA"/>
</dbReference>
<dbReference type="InterPro" id="IPR024061">
    <property type="entry name" value="NDT80_DNA-bd_dom"/>
</dbReference>
<dbReference type="InterPro" id="IPR037141">
    <property type="entry name" value="NDT80_DNA-bd_dom_sf"/>
</dbReference>
<dbReference type="InterPro" id="IPR008967">
    <property type="entry name" value="p53-like_TF_DNA-bd_sf"/>
</dbReference>
<dbReference type="InterPro" id="IPR030392">
    <property type="entry name" value="S74_ICA"/>
</dbReference>
<dbReference type="PANTHER" id="PTHR13029">
    <property type="match status" value="1"/>
</dbReference>
<dbReference type="PANTHER" id="PTHR13029:SF17">
    <property type="entry name" value="MYELIN REGULATORY FACTOR-LIKE PROTEIN"/>
    <property type="match status" value="1"/>
</dbReference>
<dbReference type="Pfam" id="PF13888">
    <property type="entry name" value="MRF_C2"/>
    <property type="match status" value="1"/>
</dbReference>
<dbReference type="Pfam" id="PF13887">
    <property type="entry name" value="MYRF_ICA"/>
    <property type="match status" value="1"/>
</dbReference>
<dbReference type="Pfam" id="PF05224">
    <property type="entry name" value="NDT80_PhoG"/>
    <property type="match status" value="1"/>
</dbReference>
<dbReference type="Pfam" id="PF13884">
    <property type="entry name" value="Peptidase_S74"/>
    <property type="match status" value="1"/>
</dbReference>
<dbReference type="SUPFAM" id="SSF49417">
    <property type="entry name" value="p53-like transcription factors"/>
    <property type="match status" value="1"/>
</dbReference>
<dbReference type="PROSITE" id="PS51688">
    <property type="entry name" value="ICA"/>
    <property type="match status" value="1"/>
</dbReference>
<dbReference type="PROSITE" id="PS51517">
    <property type="entry name" value="NDT80"/>
    <property type="match status" value="1"/>
</dbReference>
<keyword id="KW-0175">Coiled coil</keyword>
<keyword id="KW-0238">DNA-binding</keyword>
<keyword id="KW-0472">Membrane</keyword>
<keyword id="KW-1185">Reference proteome</keyword>
<keyword id="KW-0812">Transmembrane</keyword>
<keyword id="KW-1133">Transmembrane helix</keyword>
<evidence type="ECO:0000255" key="1"/>
<evidence type="ECO:0000255" key="2">
    <source>
        <dbReference type="PROSITE-ProRule" id="PRU00850"/>
    </source>
</evidence>
<evidence type="ECO:0000255" key="3">
    <source>
        <dbReference type="PROSITE-ProRule" id="PRU01025"/>
    </source>
</evidence>
<evidence type="ECO:0000256" key="4">
    <source>
        <dbReference type="SAM" id="MobiDB-lite"/>
    </source>
</evidence>
<evidence type="ECO:0000305" key="5"/>
<name>MRFL_BOVIN</name>
<proteinExistence type="evidence at transcript level"/>
<gene>
    <name type="primary">MYRFL</name>
</gene>
<sequence>MDVVGENEALQQFFEAQGANGTLGNPTLDTSLLEEFLGNDFDLGALQGQLPDTPPYSASDSCSPPQVKGACCPTLTPAARGTPAALLHSANAPGILPAHQSHSSSEMSNSGLPHRTFHNCYPDASHLMSPLDQSVSGGIGCSYHQQPLCHSPGVSLPPTKKRKCTQVLEDSGDCHVWTHHSRPMTGRSHSIEVQDLDSERQNMMLADQPSPALKWQPYRSVPWHSLLNSQYEKLPDVGYRVVTDKGFNFSPADEAFVCQKKNHFQITIHIQVWGSPKFVKTQMGLKPIEMFYLKPFGVKVEATNQIIAIEQSQADRSKKIFNPIKINLLADQVTKVTLGRLHFSETTANNMRKKGKPNPDQRYFMLVVGLYAANQDQFYLLSAHISERIIVRASNPGQFENDIDALWQRGQVPESVVCHGRVGINTDAPDEALVVCGNMKVMGTIMHPSDSRAKQNVQEVDTNEQLRRIAQMRIVEYDYKPEFASAMGINTAHQTGMIAQEVREILPRAVREVGDVTCENGETLENFLMVDKDQIFMENVGAVKQLCKLTNNLEERIEELEIWNRKLARLKRLSSSKSSASEASSISKFSRALSASSPKRTISKKNSKVSFSGKKQSCPNWVFQSLVITLIAVMAFCLKDQDRCTPSAPSSNLTSSQEPALPSTASPSAPNTTLATTLPSFQVPEITFCEILPCQQTYCCPIWGTRRGLSSPMQRQLEEQEPHQGPWAGRSTSFLAAEAQTNVDWRSDWIDTTISSIQIMEIQQIIDRRYCSRSLQCGSGNYYYHIPVNKYTPTNVKFSLEINTTEPLIVFQCKFTLGNMCFRSKIEAKGMESQQEVSQEMTQGYQHIWSLPVAPLFDSGYHFRVAAPDLADCSTDPYFAGKFFTDYFFYFYRHCV</sequence>
<organism>
    <name type="scientific">Bos taurus</name>
    <name type="common">Bovine</name>
    <dbReference type="NCBI Taxonomy" id="9913"/>
    <lineage>
        <taxon>Eukaryota</taxon>
        <taxon>Metazoa</taxon>
        <taxon>Chordata</taxon>
        <taxon>Craniata</taxon>
        <taxon>Vertebrata</taxon>
        <taxon>Euteleostomi</taxon>
        <taxon>Mammalia</taxon>
        <taxon>Eutheria</taxon>
        <taxon>Laurasiatheria</taxon>
        <taxon>Artiodactyla</taxon>
        <taxon>Ruminantia</taxon>
        <taxon>Pecora</taxon>
        <taxon>Bovidae</taxon>
        <taxon>Bovinae</taxon>
        <taxon>Bos</taxon>
    </lineage>
</organism>